<comment type="function">
    <text evidence="1">Together with its co-chaperonin GroES, plays an essential role in assisting protein folding. The GroEL-GroES system forms a nano-cage that allows encapsulation of the non-native substrate proteins and provides a physical environment optimized to promote and accelerate protein folding.</text>
</comment>
<comment type="catalytic activity">
    <reaction evidence="1">
        <text>ATP + H2O + a folded polypeptide = ADP + phosphate + an unfolded polypeptide.</text>
        <dbReference type="EC" id="5.6.1.7"/>
    </reaction>
</comment>
<comment type="subunit">
    <text evidence="1">Forms a cylinder of 14 subunits composed of two heptameric rings stacked back-to-back. Interacts with the co-chaperonin GroES.</text>
</comment>
<comment type="subcellular location">
    <subcellularLocation>
        <location evidence="1">Plastid</location>
        <location evidence="1">Chloroplast</location>
    </subcellularLocation>
</comment>
<comment type="similarity">
    <text evidence="1">Belongs to the chaperonin (HSP60) family.</text>
</comment>
<evidence type="ECO:0000255" key="1">
    <source>
        <dbReference type="HAMAP-Rule" id="MF_00600"/>
    </source>
</evidence>
<geneLocation type="chloroplast"/>
<accession>Q9TLZ1</accession>
<keyword id="KW-0067">ATP-binding</keyword>
<keyword id="KW-0143">Chaperone</keyword>
<keyword id="KW-0150">Chloroplast</keyword>
<keyword id="KW-0413">Isomerase</keyword>
<keyword id="KW-0547">Nucleotide-binding</keyword>
<keyword id="KW-0934">Plastid</keyword>
<protein>
    <recommendedName>
        <fullName evidence="1">Chaperonin GroEL, chloroplastic</fullName>
        <ecNumber evidence="1">5.6.1.7</ecNumber>
    </recommendedName>
    <alternativeName>
        <fullName evidence="1">60 kDa chaperonin</fullName>
    </alternativeName>
    <alternativeName>
        <fullName evidence="1">Chaperonin-60</fullName>
        <shortName evidence="1">Cpn60</shortName>
    </alternativeName>
</protein>
<dbReference type="EC" id="5.6.1.7" evidence="1"/>
<dbReference type="EMBL" id="AF022186">
    <property type="protein sequence ID" value="AAF12968.1"/>
    <property type="molecule type" value="Genomic_DNA"/>
</dbReference>
<dbReference type="RefSeq" id="NP_045126.1">
    <property type="nucleotide sequence ID" value="NC_001840.1"/>
</dbReference>
<dbReference type="SMR" id="Q9TLZ1"/>
<dbReference type="GeneID" id="800122"/>
<dbReference type="GO" id="GO:0009507">
    <property type="term" value="C:chloroplast"/>
    <property type="evidence" value="ECO:0007669"/>
    <property type="project" value="UniProtKB-SubCell"/>
</dbReference>
<dbReference type="GO" id="GO:0005524">
    <property type="term" value="F:ATP binding"/>
    <property type="evidence" value="ECO:0007669"/>
    <property type="project" value="UniProtKB-UniRule"/>
</dbReference>
<dbReference type="GO" id="GO:0140662">
    <property type="term" value="F:ATP-dependent protein folding chaperone"/>
    <property type="evidence" value="ECO:0007669"/>
    <property type="project" value="InterPro"/>
</dbReference>
<dbReference type="GO" id="GO:0016853">
    <property type="term" value="F:isomerase activity"/>
    <property type="evidence" value="ECO:0007669"/>
    <property type="project" value="UniProtKB-KW"/>
</dbReference>
<dbReference type="GO" id="GO:0051082">
    <property type="term" value="F:unfolded protein binding"/>
    <property type="evidence" value="ECO:0007669"/>
    <property type="project" value="UniProtKB-UniRule"/>
</dbReference>
<dbReference type="GO" id="GO:0042026">
    <property type="term" value="P:protein refolding"/>
    <property type="evidence" value="ECO:0007669"/>
    <property type="project" value="UniProtKB-UniRule"/>
</dbReference>
<dbReference type="CDD" id="cd03344">
    <property type="entry name" value="GroEL"/>
    <property type="match status" value="1"/>
</dbReference>
<dbReference type="FunFam" id="3.50.7.10:FF:000001">
    <property type="entry name" value="60 kDa chaperonin"/>
    <property type="match status" value="1"/>
</dbReference>
<dbReference type="Gene3D" id="3.50.7.10">
    <property type="entry name" value="GroEL"/>
    <property type="match status" value="1"/>
</dbReference>
<dbReference type="Gene3D" id="1.10.560.10">
    <property type="entry name" value="GroEL-like equatorial domain"/>
    <property type="match status" value="1"/>
</dbReference>
<dbReference type="Gene3D" id="3.30.260.10">
    <property type="entry name" value="TCP-1-like chaperonin intermediate domain"/>
    <property type="match status" value="1"/>
</dbReference>
<dbReference type="HAMAP" id="MF_00600">
    <property type="entry name" value="CH60"/>
    <property type="match status" value="1"/>
</dbReference>
<dbReference type="InterPro" id="IPR018370">
    <property type="entry name" value="Chaperonin_Cpn60_CS"/>
</dbReference>
<dbReference type="InterPro" id="IPR001844">
    <property type="entry name" value="Cpn60/GroEL"/>
</dbReference>
<dbReference type="InterPro" id="IPR002423">
    <property type="entry name" value="Cpn60/GroEL/TCP-1"/>
</dbReference>
<dbReference type="InterPro" id="IPR027409">
    <property type="entry name" value="GroEL-like_apical_dom_sf"/>
</dbReference>
<dbReference type="InterPro" id="IPR027413">
    <property type="entry name" value="GROEL-like_equatorial_sf"/>
</dbReference>
<dbReference type="InterPro" id="IPR027410">
    <property type="entry name" value="TCP-1-like_intermed_sf"/>
</dbReference>
<dbReference type="NCBIfam" id="TIGR02348">
    <property type="entry name" value="GroEL"/>
    <property type="match status" value="1"/>
</dbReference>
<dbReference type="NCBIfam" id="NF000592">
    <property type="entry name" value="PRK00013.1"/>
    <property type="match status" value="1"/>
</dbReference>
<dbReference type="NCBIfam" id="NF009487">
    <property type="entry name" value="PRK12849.1"/>
    <property type="match status" value="1"/>
</dbReference>
<dbReference type="NCBIfam" id="NF009488">
    <property type="entry name" value="PRK12850.1"/>
    <property type="match status" value="1"/>
</dbReference>
<dbReference type="NCBIfam" id="NF009489">
    <property type="entry name" value="PRK12851.1"/>
    <property type="match status" value="1"/>
</dbReference>
<dbReference type="PANTHER" id="PTHR45633">
    <property type="entry name" value="60 KDA HEAT SHOCK PROTEIN, MITOCHONDRIAL"/>
    <property type="match status" value="1"/>
</dbReference>
<dbReference type="Pfam" id="PF00118">
    <property type="entry name" value="Cpn60_TCP1"/>
    <property type="match status" value="1"/>
</dbReference>
<dbReference type="PRINTS" id="PR00298">
    <property type="entry name" value="CHAPERONIN60"/>
</dbReference>
<dbReference type="SUPFAM" id="SSF52029">
    <property type="entry name" value="GroEL apical domain-like"/>
    <property type="match status" value="1"/>
</dbReference>
<dbReference type="SUPFAM" id="SSF48592">
    <property type="entry name" value="GroEL equatorial domain-like"/>
    <property type="match status" value="1"/>
</dbReference>
<dbReference type="SUPFAM" id="SSF54849">
    <property type="entry name" value="GroEL-intermediate domain like"/>
    <property type="match status" value="1"/>
</dbReference>
<dbReference type="PROSITE" id="PS00296">
    <property type="entry name" value="CHAPERONINS_CPN60"/>
    <property type="match status" value="1"/>
</dbReference>
<proteinExistence type="inferred from homology"/>
<feature type="chain" id="PRO_0000063621" description="Chaperonin GroEL, chloroplastic">
    <location>
        <begin position="1"/>
        <end position="530"/>
    </location>
</feature>
<feature type="binding site" evidence="1">
    <location>
        <begin position="29"/>
        <end position="32"/>
    </location>
    <ligand>
        <name>ATP</name>
        <dbReference type="ChEBI" id="CHEBI:30616"/>
    </ligand>
</feature>
<feature type="binding site" evidence="1">
    <location>
        <begin position="86"/>
        <end position="90"/>
    </location>
    <ligand>
        <name>ATP</name>
        <dbReference type="ChEBI" id="CHEBI:30616"/>
    </ligand>
</feature>
<feature type="binding site" evidence="1">
    <location>
        <position position="414"/>
    </location>
    <ligand>
        <name>ATP</name>
        <dbReference type="ChEBI" id="CHEBI:30616"/>
    </ligand>
</feature>
<feature type="binding site" evidence="1">
    <location>
        <begin position="480"/>
        <end position="482"/>
    </location>
    <ligand>
        <name>ATP</name>
        <dbReference type="ChEBI" id="CHEBI:30616"/>
    </ligand>
</feature>
<feature type="binding site" evidence="1">
    <location>
        <position position="496"/>
    </location>
    <ligand>
        <name>ATP</name>
        <dbReference type="ChEBI" id="CHEBI:30616"/>
    </ligand>
</feature>
<sequence length="530" mass="57319">MSKRILYKDQARKALERGIDVLAKAVSITLGPKGRNVVIDKKYGAPQIINDGIAIAKEIELKNHMENTGVSLIRQAAAKTNDVAGDGTTTATVLAHAIIKQGLKYVSTGSNPISLKKGIEKASQFIIQKISENSRPIEDVKSIIQVSSISAGNDEEIGSMIANAIQKVGKDGVISLEEGKSAITELEITQGMKFEKGYISPYFITNSEKMEVVLENPYILMTDKKITLVKEDLLPVLTLINKTNRPLLIIAEDVEKEALATLVINKLRGIVNVVAVRAPGFGDRKKALLEDIAILTNGQVISEETGLNLETITLDVLGQARRATILRDSTTIVEDKNQQAVHARCEQLKNQLLIAKSSYEKEKLQERLAKLIGGVAVIKVGAATETEMKEKKLRLEDSINATKAAIEEGIVPGGGTALVHISANLKQWAKINLSSDELLGANIVEQASLAPLHKIAENSGKNGSLIVEALEHKNFEIGYDALSNSLVDMYDAGIIDPAKVTRSAIQNAASIASMVLTTECVIVNRDKKNN</sequence>
<reference key="1">
    <citation type="journal article" date="2000" name="J. Mol. Evol.">
        <title>The structure and gene repertoire of an ancient red algal plastid genome.</title>
        <authorList>
            <person name="Gloeckner G."/>
            <person name="Rosenthal A."/>
            <person name="Valentin K.-U."/>
        </authorList>
    </citation>
    <scope>NUCLEOTIDE SEQUENCE [LARGE SCALE GENOMIC DNA]</scope>
    <source>
        <strain>RK-1</strain>
    </source>
</reference>
<organism>
    <name type="scientific">Cyanidium caldarium</name>
    <name type="common">Red alga</name>
    <dbReference type="NCBI Taxonomy" id="2771"/>
    <lineage>
        <taxon>Eukaryota</taxon>
        <taxon>Rhodophyta</taxon>
        <taxon>Bangiophyceae</taxon>
        <taxon>Cyanidiales</taxon>
        <taxon>Cyanidiaceae</taxon>
        <taxon>Cyanidium</taxon>
    </lineage>
</organism>
<gene>
    <name evidence="1" type="primary">groEL</name>
    <name evidence="1" type="synonym">groL</name>
</gene>
<name>CH60_CYACA</name>